<comment type="function">
    <text>May be involved in transcriptional regulation.</text>
</comment>
<comment type="interaction">
    <interactant intactId="EBI-2555762">
        <id>Q969W8</id>
    </interactant>
    <interactant intactId="EBI-742102">
        <id>Q8IYI6</id>
        <label>EXOC8</label>
    </interactant>
    <organismsDiffer>false</organismsDiffer>
    <experiments>3</experiments>
</comment>
<comment type="interaction">
    <interactant intactId="EBI-2555762">
        <id>Q969W8</id>
    </interactant>
    <interactant intactId="EBI-8472129">
        <id>Q9HAQ2</id>
        <label>KIF9</label>
    </interactant>
    <organismsDiffer>false</organismsDiffer>
    <experiments>3</experiments>
</comment>
<comment type="interaction">
    <interactant intactId="EBI-2555762">
        <id>Q969W8</id>
    </interactant>
    <interactant intactId="EBI-746778">
        <id>Q96A72</id>
        <label>MAGOHB</label>
    </interactant>
    <organismsDiffer>false</organismsDiffer>
    <experiments>3</experiments>
</comment>
<comment type="interaction">
    <interactant intactId="EBI-2555762">
        <id>Q969W8</id>
    </interactant>
    <interactant intactId="EBI-5235340">
        <id>Q7Z699</id>
        <label>SPRED1</label>
    </interactant>
    <organismsDiffer>false</organismsDiffer>
    <experiments>3</experiments>
</comment>
<comment type="subcellular location">
    <subcellularLocation>
        <location evidence="4">Nucleus</location>
    </subcellularLocation>
</comment>
<comment type="alternative products">
    <event type="alternative splicing"/>
    <isoform>
        <id>Q969W8-1</id>
        <name>1</name>
        <sequence type="displayed"/>
    </isoform>
    <isoform>
        <id>Q969W8-2</id>
        <name>2</name>
        <sequence type="described" ref="VSP_043419"/>
    </isoform>
</comment>
<comment type="similarity">
    <text evidence="4">Belongs to the krueppel C2H2-type zinc-finger protein family.</text>
</comment>
<name>ZN566_HUMAN</name>
<evidence type="ECO:0000255" key="1">
    <source>
        <dbReference type="PROSITE-ProRule" id="PRU00042"/>
    </source>
</evidence>
<evidence type="ECO:0000255" key="2">
    <source>
        <dbReference type="PROSITE-ProRule" id="PRU00119"/>
    </source>
</evidence>
<evidence type="ECO:0000303" key="3">
    <source>
    </source>
</evidence>
<evidence type="ECO:0000305" key="4"/>
<evidence type="ECO:0007744" key="5">
    <source>
    </source>
</evidence>
<protein>
    <recommendedName>
        <fullName>Zinc finger protein 566</fullName>
    </recommendedName>
</protein>
<dbReference type="EMBL" id="AK027685">
    <property type="protein sequence ID" value="BAB55296.1"/>
    <property type="molecule type" value="mRNA"/>
</dbReference>
<dbReference type="EMBL" id="AC092295">
    <property type="status" value="NOT_ANNOTATED_CDS"/>
    <property type="molecule type" value="Genomic_DNA"/>
</dbReference>
<dbReference type="EMBL" id="AC092296">
    <property type="status" value="NOT_ANNOTATED_CDS"/>
    <property type="molecule type" value="Genomic_DNA"/>
</dbReference>
<dbReference type="EMBL" id="BC007064">
    <property type="protein sequence ID" value="AAH07064.1"/>
    <property type="molecule type" value="mRNA"/>
</dbReference>
<dbReference type="EMBL" id="BC104886">
    <property type="protein sequence ID" value="AAI04887.1"/>
    <property type="molecule type" value="mRNA"/>
</dbReference>
<dbReference type="EMBL" id="BC104888">
    <property type="protein sequence ID" value="AAI04889.1"/>
    <property type="molecule type" value="mRNA"/>
</dbReference>
<dbReference type="EMBL" id="BC143658">
    <property type="protein sequence ID" value="AAI43659.1"/>
    <property type="molecule type" value="mRNA"/>
</dbReference>
<dbReference type="CCDS" id="CCDS12494.1">
    <molecule id="Q969W8-1"/>
</dbReference>
<dbReference type="CCDS" id="CCDS46061.1">
    <molecule id="Q969W8-2"/>
</dbReference>
<dbReference type="RefSeq" id="NP_001138815.1">
    <molecule id="Q969W8-2"/>
    <property type="nucleotide sequence ID" value="NM_001145343.1"/>
</dbReference>
<dbReference type="RefSeq" id="NP_001138816.1">
    <molecule id="Q969W8-1"/>
    <property type="nucleotide sequence ID" value="NM_001145344.1"/>
</dbReference>
<dbReference type="RefSeq" id="NP_001138817.1">
    <molecule id="Q969W8-1"/>
    <property type="nucleotide sequence ID" value="NM_001145345.1"/>
</dbReference>
<dbReference type="RefSeq" id="NP_001287899.1">
    <property type="nucleotide sequence ID" value="NM_001300970.1"/>
</dbReference>
<dbReference type="RefSeq" id="NP_116227.1">
    <molecule id="Q969W8-1"/>
    <property type="nucleotide sequence ID" value="NM_032838.4"/>
</dbReference>
<dbReference type="RefSeq" id="XP_006723510.1">
    <molecule id="Q969W8-2"/>
    <property type="nucleotide sequence ID" value="XM_006723447.3"/>
</dbReference>
<dbReference type="RefSeq" id="XP_054178409.1">
    <molecule id="Q969W8-2"/>
    <property type="nucleotide sequence ID" value="XM_054322434.1"/>
</dbReference>
<dbReference type="SMR" id="Q969W8"/>
<dbReference type="BioGRID" id="124359">
    <property type="interactions" value="16"/>
</dbReference>
<dbReference type="FunCoup" id="Q969W8">
    <property type="interactions" value="231"/>
</dbReference>
<dbReference type="IntAct" id="Q969W8">
    <property type="interactions" value="18"/>
</dbReference>
<dbReference type="STRING" id="9606.ENSP00000376010"/>
<dbReference type="GlyGen" id="Q969W8">
    <property type="glycosylation" value="1 site, 1 N-linked glycan (1 site)"/>
</dbReference>
<dbReference type="iPTMnet" id="Q969W8"/>
<dbReference type="PhosphoSitePlus" id="Q969W8"/>
<dbReference type="BioMuta" id="ZNF566"/>
<dbReference type="DMDM" id="55976754"/>
<dbReference type="jPOST" id="Q969W8"/>
<dbReference type="MassIVE" id="Q969W8"/>
<dbReference type="PaxDb" id="9606-ENSP00000376010"/>
<dbReference type="PeptideAtlas" id="Q969W8"/>
<dbReference type="ProteomicsDB" id="75862">
    <molecule id="Q969W8-1"/>
</dbReference>
<dbReference type="ProteomicsDB" id="75863">
    <molecule id="Q969W8-2"/>
</dbReference>
<dbReference type="Pumba" id="Q969W8"/>
<dbReference type="Antibodypedia" id="16312">
    <property type="antibodies" value="97 antibodies from 14 providers"/>
</dbReference>
<dbReference type="DNASU" id="84924"/>
<dbReference type="Ensembl" id="ENST00000392170.7">
    <molecule id="Q969W8-2"/>
    <property type="protein sequence ID" value="ENSP00000376010.2"/>
    <property type="gene ID" value="ENSG00000186017.16"/>
</dbReference>
<dbReference type="Ensembl" id="ENST00000424129.7">
    <molecule id="Q969W8-1"/>
    <property type="protein sequence ID" value="ENSP00000401259.2"/>
    <property type="gene ID" value="ENSG00000186017.16"/>
</dbReference>
<dbReference type="Ensembl" id="ENST00000427002.2">
    <molecule id="Q969W8-2"/>
    <property type="protein sequence ID" value="ENSP00000400651.2"/>
    <property type="gene ID" value="ENSG00000186017.16"/>
</dbReference>
<dbReference type="Ensembl" id="ENST00000434377.6">
    <molecule id="Q969W8-1"/>
    <property type="protein sequence ID" value="ENSP00000415520.2"/>
    <property type="gene ID" value="ENSG00000186017.16"/>
</dbReference>
<dbReference type="Ensembl" id="ENST00000452939.7">
    <molecule id="Q969W8-1"/>
    <property type="protein sequence ID" value="ENSP00000411526.2"/>
    <property type="gene ID" value="ENSG00000186017.16"/>
</dbReference>
<dbReference type="GeneID" id="84924"/>
<dbReference type="KEGG" id="hsa:84924"/>
<dbReference type="MANE-Select" id="ENST00000452939.7">
    <property type="protein sequence ID" value="ENSP00000411526.2"/>
    <property type="RefSeq nucleotide sequence ID" value="NM_001145344.1"/>
    <property type="RefSeq protein sequence ID" value="NP_001138816.1"/>
</dbReference>
<dbReference type="UCSC" id="uc002oea.4">
    <molecule id="Q969W8-1"/>
    <property type="organism name" value="human"/>
</dbReference>
<dbReference type="AGR" id="HGNC:25919"/>
<dbReference type="CTD" id="84924"/>
<dbReference type="DisGeNET" id="84924"/>
<dbReference type="GeneCards" id="ZNF566"/>
<dbReference type="HGNC" id="HGNC:25919">
    <property type="gene designation" value="ZNF566"/>
</dbReference>
<dbReference type="HPA" id="ENSG00000186017">
    <property type="expression patterns" value="Low tissue specificity"/>
</dbReference>
<dbReference type="neXtProt" id="NX_Q969W8"/>
<dbReference type="OpenTargets" id="ENSG00000186017"/>
<dbReference type="PharmGKB" id="PA134977695"/>
<dbReference type="VEuPathDB" id="HostDB:ENSG00000186017"/>
<dbReference type="eggNOG" id="KOG1721">
    <property type="taxonomic scope" value="Eukaryota"/>
</dbReference>
<dbReference type="GeneTree" id="ENSGT00940000162125"/>
<dbReference type="HOGENOM" id="CLU_002678_44_0_1"/>
<dbReference type="InParanoid" id="Q969W8"/>
<dbReference type="OMA" id="IMGRLTR"/>
<dbReference type="OrthoDB" id="9411774at2759"/>
<dbReference type="PAN-GO" id="Q969W8">
    <property type="GO annotations" value="3 GO annotations based on evolutionary models"/>
</dbReference>
<dbReference type="PhylomeDB" id="Q969W8"/>
<dbReference type="TreeFam" id="TF338743"/>
<dbReference type="PathwayCommons" id="Q969W8"/>
<dbReference type="Reactome" id="R-HSA-212436">
    <property type="pathway name" value="Generic Transcription Pathway"/>
</dbReference>
<dbReference type="SignaLink" id="Q969W8"/>
<dbReference type="BioGRID-ORCS" id="84924">
    <property type="hits" value="19 hits in 1180 CRISPR screens"/>
</dbReference>
<dbReference type="ChiTaRS" id="ZNF566">
    <property type="organism name" value="human"/>
</dbReference>
<dbReference type="GenomeRNAi" id="84924"/>
<dbReference type="Pharos" id="Q969W8">
    <property type="development level" value="Tdark"/>
</dbReference>
<dbReference type="PRO" id="PR:Q969W8"/>
<dbReference type="Proteomes" id="UP000005640">
    <property type="component" value="Chromosome 19"/>
</dbReference>
<dbReference type="RNAct" id="Q969W8">
    <property type="molecule type" value="protein"/>
</dbReference>
<dbReference type="Bgee" id="ENSG00000186017">
    <property type="expression patterns" value="Expressed in primordial germ cell in gonad and 127 other cell types or tissues"/>
</dbReference>
<dbReference type="ExpressionAtlas" id="Q969W8">
    <property type="expression patterns" value="baseline and differential"/>
</dbReference>
<dbReference type="GO" id="GO:0005634">
    <property type="term" value="C:nucleus"/>
    <property type="evidence" value="ECO:0000318"/>
    <property type="project" value="GO_Central"/>
</dbReference>
<dbReference type="GO" id="GO:0000981">
    <property type="term" value="F:DNA-binding transcription factor activity, RNA polymerase II-specific"/>
    <property type="evidence" value="ECO:0000318"/>
    <property type="project" value="GO_Central"/>
</dbReference>
<dbReference type="GO" id="GO:0000977">
    <property type="term" value="F:RNA polymerase II transcription regulatory region sequence-specific DNA binding"/>
    <property type="evidence" value="ECO:0000318"/>
    <property type="project" value="GO_Central"/>
</dbReference>
<dbReference type="GO" id="GO:0008270">
    <property type="term" value="F:zinc ion binding"/>
    <property type="evidence" value="ECO:0007669"/>
    <property type="project" value="UniProtKB-KW"/>
</dbReference>
<dbReference type="GO" id="GO:0006357">
    <property type="term" value="P:regulation of transcription by RNA polymerase II"/>
    <property type="evidence" value="ECO:0000318"/>
    <property type="project" value="GO_Central"/>
</dbReference>
<dbReference type="CDD" id="cd07765">
    <property type="entry name" value="KRAB_A-box"/>
    <property type="match status" value="1"/>
</dbReference>
<dbReference type="FunFam" id="3.30.160.60:FF:000800">
    <property type="entry name" value="zinc finger protein 181 isoform X2"/>
    <property type="match status" value="3"/>
</dbReference>
<dbReference type="FunFam" id="3.30.160.60:FF:000052">
    <property type="entry name" value="zinc finger protein 546 isoform X1"/>
    <property type="match status" value="1"/>
</dbReference>
<dbReference type="FunFam" id="3.30.160.60:FF:000737">
    <property type="entry name" value="Zinc finger protein 565"/>
    <property type="match status" value="1"/>
</dbReference>
<dbReference type="FunFam" id="3.30.160.60:FF:001570">
    <property type="entry name" value="zinc finger protein 566 isoform X1"/>
    <property type="match status" value="1"/>
</dbReference>
<dbReference type="FunFam" id="3.30.160.60:FF:002621">
    <property type="entry name" value="zinc finger protein 566 isoform X1"/>
    <property type="match status" value="1"/>
</dbReference>
<dbReference type="FunFam" id="3.30.160.60:FF:001037">
    <property type="entry name" value="zinc finger protein 566 isoform X2"/>
    <property type="match status" value="1"/>
</dbReference>
<dbReference type="FunFam" id="3.30.160.60:FF:001381">
    <property type="entry name" value="zinc finger protein 566 isoform X2"/>
    <property type="match status" value="1"/>
</dbReference>
<dbReference type="Gene3D" id="6.10.140.140">
    <property type="match status" value="1"/>
</dbReference>
<dbReference type="Gene3D" id="3.30.160.60">
    <property type="entry name" value="Classic Zinc Finger"/>
    <property type="match status" value="9"/>
</dbReference>
<dbReference type="InterPro" id="IPR001909">
    <property type="entry name" value="KRAB"/>
</dbReference>
<dbReference type="InterPro" id="IPR036051">
    <property type="entry name" value="KRAB_dom_sf"/>
</dbReference>
<dbReference type="InterPro" id="IPR050758">
    <property type="entry name" value="Znf_C2H2-type"/>
</dbReference>
<dbReference type="InterPro" id="IPR036236">
    <property type="entry name" value="Znf_C2H2_sf"/>
</dbReference>
<dbReference type="InterPro" id="IPR013087">
    <property type="entry name" value="Znf_C2H2_type"/>
</dbReference>
<dbReference type="PANTHER" id="PTHR23234:SF10">
    <property type="entry name" value="RIKEN CDNA 6720489N17 GENE-RELATED"/>
    <property type="match status" value="1"/>
</dbReference>
<dbReference type="PANTHER" id="PTHR23234">
    <property type="entry name" value="ZNF44 PROTEIN"/>
    <property type="match status" value="1"/>
</dbReference>
<dbReference type="Pfam" id="PF01352">
    <property type="entry name" value="KRAB"/>
    <property type="match status" value="1"/>
</dbReference>
<dbReference type="Pfam" id="PF00096">
    <property type="entry name" value="zf-C2H2"/>
    <property type="match status" value="5"/>
</dbReference>
<dbReference type="Pfam" id="PF13465">
    <property type="entry name" value="zf-H2C2_2"/>
    <property type="match status" value="1"/>
</dbReference>
<dbReference type="SMART" id="SM00349">
    <property type="entry name" value="KRAB"/>
    <property type="match status" value="1"/>
</dbReference>
<dbReference type="SMART" id="SM00355">
    <property type="entry name" value="ZnF_C2H2"/>
    <property type="match status" value="7"/>
</dbReference>
<dbReference type="SUPFAM" id="SSF57667">
    <property type="entry name" value="beta-beta-alpha zinc fingers"/>
    <property type="match status" value="5"/>
</dbReference>
<dbReference type="SUPFAM" id="SSF109640">
    <property type="entry name" value="KRAB domain (Kruppel-associated box)"/>
    <property type="match status" value="1"/>
</dbReference>
<dbReference type="PROSITE" id="PS50805">
    <property type="entry name" value="KRAB"/>
    <property type="match status" value="1"/>
</dbReference>
<dbReference type="PROSITE" id="PS00028">
    <property type="entry name" value="ZINC_FINGER_C2H2_1"/>
    <property type="match status" value="7"/>
</dbReference>
<dbReference type="PROSITE" id="PS50157">
    <property type="entry name" value="ZINC_FINGER_C2H2_2"/>
    <property type="match status" value="7"/>
</dbReference>
<accession>Q969W8</accession>
<accession>B7ZL95</accession>
<accession>Q2M3J1</accession>
<keyword id="KW-0025">Alternative splicing</keyword>
<keyword id="KW-0238">DNA-binding</keyword>
<keyword id="KW-1017">Isopeptide bond</keyword>
<keyword id="KW-0479">Metal-binding</keyword>
<keyword id="KW-0539">Nucleus</keyword>
<keyword id="KW-1267">Proteomics identification</keyword>
<keyword id="KW-1185">Reference proteome</keyword>
<keyword id="KW-0677">Repeat</keyword>
<keyword id="KW-0804">Transcription</keyword>
<keyword id="KW-0805">Transcription regulation</keyword>
<keyword id="KW-0832">Ubl conjugation</keyword>
<keyword id="KW-0862">Zinc</keyword>
<keyword id="KW-0863">Zinc-finger</keyword>
<feature type="chain" id="PRO_0000047656" description="Zinc finger protein 566">
    <location>
        <begin position="1"/>
        <end position="418"/>
    </location>
</feature>
<feature type="domain" description="KRAB" evidence="2">
    <location>
        <begin position="6"/>
        <end position="77"/>
    </location>
</feature>
<feature type="zinc finger region" description="C2H2-type 1; degenerate" evidence="1">
    <location>
        <begin position="169"/>
        <end position="193"/>
    </location>
</feature>
<feature type="zinc finger region" description="C2H2-type 2" evidence="1">
    <location>
        <begin position="199"/>
        <end position="221"/>
    </location>
</feature>
<feature type="zinc finger region" description="C2H2-type 3" evidence="1">
    <location>
        <begin position="227"/>
        <end position="249"/>
    </location>
</feature>
<feature type="zinc finger region" description="C2H2-type 4" evidence="1">
    <location>
        <begin position="255"/>
        <end position="277"/>
    </location>
</feature>
<feature type="zinc finger region" description="C2H2-type 5" evidence="1">
    <location>
        <begin position="283"/>
        <end position="305"/>
    </location>
</feature>
<feature type="zinc finger region" description="C2H2-type 6" evidence="1">
    <location>
        <begin position="311"/>
        <end position="333"/>
    </location>
</feature>
<feature type="zinc finger region" description="C2H2-type 7" evidence="1">
    <location>
        <begin position="339"/>
        <end position="361"/>
    </location>
</feature>
<feature type="zinc finger region" description="C2H2-type 8" evidence="1">
    <location>
        <begin position="367"/>
        <end position="389"/>
    </location>
</feature>
<feature type="cross-link" description="Glycyl lysine isopeptide (Lys-Gly) (interchain with G-Cter in SUMO2)" evidence="5">
    <location>
        <position position="314"/>
    </location>
</feature>
<feature type="cross-link" description="Glycyl lysine isopeptide (Lys-Gly) (interchain with G-Cter in SUMO2)" evidence="5">
    <location>
        <position position="328"/>
    </location>
</feature>
<feature type="splice variant" id="VSP_043419" description="In isoform 2." evidence="3">
    <original>M</original>
    <variation>MA</variation>
    <location>
        <position position="45"/>
    </location>
</feature>
<sequence>MAQESVMFSDVSVDFSQEEWECLNDDQRDLYRDVMLENYSNLVSMGHSISKPNVISYLEQGKEPWLADRELTRGQWPVLESRCETKKLFLKKEIYEIESTQWEIMEKLTRRDFQCSSFRDDWECNRQFKKELGSQGGHFNQLVFTHEDLPTLSHHPSFTLQQIINSKKKFCASKEYRKTFRHGSQFATHEIIHTIEKPYECKECGKSFRHPSRLTHHQKIHTGKKPFECKECGKTFICGSDLTRHHRIHTGEKPYECKECGKAFSSGSNFTRHQRIHTGEKPYECKECGKAFSSGSNFTQHQRIHTGEKPYECKECGNAFSQSSQLIKHQRIHTGEKPYECKECEKAFRSGSDLTRHQRIHTGEKPYECKICGKAYSQSSQLISHHRIHTSEKPYEYRECGKNFNYDPQLIQHQNLYW</sequence>
<gene>
    <name type="primary">ZNF566</name>
</gene>
<organism>
    <name type="scientific">Homo sapiens</name>
    <name type="common">Human</name>
    <dbReference type="NCBI Taxonomy" id="9606"/>
    <lineage>
        <taxon>Eukaryota</taxon>
        <taxon>Metazoa</taxon>
        <taxon>Chordata</taxon>
        <taxon>Craniata</taxon>
        <taxon>Vertebrata</taxon>
        <taxon>Euteleostomi</taxon>
        <taxon>Mammalia</taxon>
        <taxon>Eutheria</taxon>
        <taxon>Euarchontoglires</taxon>
        <taxon>Primates</taxon>
        <taxon>Haplorrhini</taxon>
        <taxon>Catarrhini</taxon>
        <taxon>Hominidae</taxon>
        <taxon>Homo</taxon>
    </lineage>
</organism>
<reference key="1">
    <citation type="journal article" date="2004" name="Nat. Genet.">
        <title>Complete sequencing and characterization of 21,243 full-length human cDNAs.</title>
        <authorList>
            <person name="Ota T."/>
            <person name="Suzuki Y."/>
            <person name="Nishikawa T."/>
            <person name="Otsuki T."/>
            <person name="Sugiyama T."/>
            <person name="Irie R."/>
            <person name="Wakamatsu A."/>
            <person name="Hayashi K."/>
            <person name="Sato H."/>
            <person name="Nagai K."/>
            <person name="Kimura K."/>
            <person name="Makita H."/>
            <person name="Sekine M."/>
            <person name="Obayashi M."/>
            <person name="Nishi T."/>
            <person name="Shibahara T."/>
            <person name="Tanaka T."/>
            <person name="Ishii S."/>
            <person name="Yamamoto J."/>
            <person name="Saito K."/>
            <person name="Kawai Y."/>
            <person name="Isono Y."/>
            <person name="Nakamura Y."/>
            <person name="Nagahari K."/>
            <person name="Murakami K."/>
            <person name="Yasuda T."/>
            <person name="Iwayanagi T."/>
            <person name="Wagatsuma M."/>
            <person name="Shiratori A."/>
            <person name="Sudo H."/>
            <person name="Hosoiri T."/>
            <person name="Kaku Y."/>
            <person name="Kodaira H."/>
            <person name="Kondo H."/>
            <person name="Sugawara M."/>
            <person name="Takahashi M."/>
            <person name="Kanda K."/>
            <person name="Yokoi T."/>
            <person name="Furuya T."/>
            <person name="Kikkawa E."/>
            <person name="Omura Y."/>
            <person name="Abe K."/>
            <person name="Kamihara K."/>
            <person name="Katsuta N."/>
            <person name="Sato K."/>
            <person name="Tanikawa M."/>
            <person name="Yamazaki M."/>
            <person name="Ninomiya K."/>
            <person name="Ishibashi T."/>
            <person name="Yamashita H."/>
            <person name="Murakawa K."/>
            <person name="Fujimori K."/>
            <person name="Tanai H."/>
            <person name="Kimata M."/>
            <person name="Watanabe M."/>
            <person name="Hiraoka S."/>
            <person name="Chiba Y."/>
            <person name="Ishida S."/>
            <person name="Ono Y."/>
            <person name="Takiguchi S."/>
            <person name="Watanabe S."/>
            <person name="Yosida M."/>
            <person name="Hotuta T."/>
            <person name="Kusano J."/>
            <person name="Kanehori K."/>
            <person name="Takahashi-Fujii A."/>
            <person name="Hara H."/>
            <person name="Tanase T.-O."/>
            <person name="Nomura Y."/>
            <person name="Togiya S."/>
            <person name="Komai F."/>
            <person name="Hara R."/>
            <person name="Takeuchi K."/>
            <person name="Arita M."/>
            <person name="Imose N."/>
            <person name="Musashino K."/>
            <person name="Yuuki H."/>
            <person name="Oshima A."/>
            <person name="Sasaki N."/>
            <person name="Aotsuka S."/>
            <person name="Yoshikawa Y."/>
            <person name="Matsunawa H."/>
            <person name="Ichihara T."/>
            <person name="Shiohata N."/>
            <person name="Sano S."/>
            <person name="Moriya S."/>
            <person name="Momiyama H."/>
            <person name="Satoh N."/>
            <person name="Takami S."/>
            <person name="Terashima Y."/>
            <person name="Suzuki O."/>
            <person name="Nakagawa S."/>
            <person name="Senoh A."/>
            <person name="Mizoguchi H."/>
            <person name="Goto Y."/>
            <person name="Shimizu F."/>
            <person name="Wakebe H."/>
            <person name="Hishigaki H."/>
            <person name="Watanabe T."/>
            <person name="Sugiyama A."/>
            <person name="Takemoto M."/>
            <person name="Kawakami B."/>
            <person name="Yamazaki M."/>
            <person name="Watanabe K."/>
            <person name="Kumagai A."/>
            <person name="Itakura S."/>
            <person name="Fukuzumi Y."/>
            <person name="Fujimori Y."/>
            <person name="Komiyama M."/>
            <person name="Tashiro H."/>
            <person name="Tanigami A."/>
            <person name="Fujiwara T."/>
            <person name="Ono T."/>
            <person name="Yamada K."/>
            <person name="Fujii Y."/>
            <person name="Ozaki K."/>
            <person name="Hirao M."/>
            <person name="Ohmori Y."/>
            <person name="Kawabata A."/>
            <person name="Hikiji T."/>
            <person name="Kobatake N."/>
            <person name="Inagaki H."/>
            <person name="Ikema Y."/>
            <person name="Okamoto S."/>
            <person name="Okitani R."/>
            <person name="Kawakami T."/>
            <person name="Noguchi S."/>
            <person name="Itoh T."/>
            <person name="Shigeta K."/>
            <person name="Senba T."/>
            <person name="Matsumura K."/>
            <person name="Nakajima Y."/>
            <person name="Mizuno T."/>
            <person name="Morinaga M."/>
            <person name="Sasaki M."/>
            <person name="Togashi T."/>
            <person name="Oyama M."/>
            <person name="Hata H."/>
            <person name="Watanabe M."/>
            <person name="Komatsu T."/>
            <person name="Mizushima-Sugano J."/>
            <person name="Satoh T."/>
            <person name="Shirai Y."/>
            <person name="Takahashi Y."/>
            <person name="Nakagawa K."/>
            <person name="Okumura K."/>
            <person name="Nagase T."/>
            <person name="Nomura N."/>
            <person name="Kikuchi H."/>
            <person name="Masuho Y."/>
            <person name="Yamashita R."/>
            <person name="Nakai K."/>
            <person name="Yada T."/>
            <person name="Nakamura Y."/>
            <person name="Ohara O."/>
            <person name="Isogai T."/>
            <person name="Sugano S."/>
        </authorList>
    </citation>
    <scope>NUCLEOTIDE SEQUENCE [LARGE SCALE MRNA] (ISOFORM 1)</scope>
</reference>
<reference key="2">
    <citation type="journal article" date="2004" name="Nature">
        <title>The DNA sequence and biology of human chromosome 19.</title>
        <authorList>
            <person name="Grimwood J."/>
            <person name="Gordon L.A."/>
            <person name="Olsen A.S."/>
            <person name="Terry A."/>
            <person name="Schmutz J."/>
            <person name="Lamerdin J.E."/>
            <person name="Hellsten U."/>
            <person name="Goodstein D."/>
            <person name="Couronne O."/>
            <person name="Tran-Gyamfi M."/>
            <person name="Aerts A."/>
            <person name="Altherr M."/>
            <person name="Ashworth L."/>
            <person name="Bajorek E."/>
            <person name="Black S."/>
            <person name="Branscomb E."/>
            <person name="Caenepeel S."/>
            <person name="Carrano A.V."/>
            <person name="Caoile C."/>
            <person name="Chan Y.M."/>
            <person name="Christensen M."/>
            <person name="Cleland C.A."/>
            <person name="Copeland A."/>
            <person name="Dalin E."/>
            <person name="Dehal P."/>
            <person name="Denys M."/>
            <person name="Detter J.C."/>
            <person name="Escobar J."/>
            <person name="Flowers D."/>
            <person name="Fotopulos D."/>
            <person name="Garcia C."/>
            <person name="Georgescu A.M."/>
            <person name="Glavina T."/>
            <person name="Gomez M."/>
            <person name="Gonzales E."/>
            <person name="Groza M."/>
            <person name="Hammon N."/>
            <person name="Hawkins T."/>
            <person name="Haydu L."/>
            <person name="Ho I."/>
            <person name="Huang W."/>
            <person name="Israni S."/>
            <person name="Jett J."/>
            <person name="Kadner K."/>
            <person name="Kimball H."/>
            <person name="Kobayashi A."/>
            <person name="Larionov V."/>
            <person name="Leem S.-H."/>
            <person name="Lopez F."/>
            <person name="Lou Y."/>
            <person name="Lowry S."/>
            <person name="Malfatti S."/>
            <person name="Martinez D."/>
            <person name="McCready P.M."/>
            <person name="Medina C."/>
            <person name="Morgan J."/>
            <person name="Nelson K."/>
            <person name="Nolan M."/>
            <person name="Ovcharenko I."/>
            <person name="Pitluck S."/>
            <person name="Pollard M."/>
            <person name="Popkie A.P."/>
            <person name="Predki P."/>
            <person name="Quan G."/>
            <person name="Ramirez L."/>
            <person name="Rash S."/>
            <person name="Retterer J."/>
            <person name="Rodriguez A."/>
            <person name="Rogers S."/>
            <person name="Salamov A."/>
            <person name="Salazar A."/>
            <person name="She X."/>
            <person name="Smith D."/>
            <person name="Slezak T."/>
            <person name="Solovyev V."/>
            <person name="Thayer N."/>
            <person name="Tice H."/>
            <person name="Tsai M."/>
            <person name="Ustaszewska A."/>
            <person name="Vo N."/>
            <person name="Wagner M."/>
            <person name="Wheeler J."/>
            <person name="Wu K."/>
            <person name="Xie G."/>
            <person name="Yang J."/>
            <person name="Dubchak I."/>
            <person name="Furey T.S."/>
            <person name="DeJong P."/>
            <person name="Dickson M."/>
            <person name="Gordon D."/>
            <person name="Eichler E.E."/>
            <person name="Pennacchio L.A."/>
            <person name="Richardson P."/>
            <person name="Stubbs L."/>
            <person name="Rokhsar D.S."/>
            <person name="Myers R.M."/>
            <person name="Rubin E.M."/>
            <person name="Lucas S.M."/>
        </authorList>
    </citation>
    <scope>NUCLEOTIDE SEQUENCE [LARGE SCALE GENOMIC DNA]</scope>
</reference>
<reference key="3">
    <citation type="journal article" date="2004" name="Genome Res.">
        <title>The status, quality, and expansion of the NIH full-length cDNA project: the Mammalian Gene Collection (MGC).</title>
        <authorList>
            <consortium name="The MGC Project Team"/>
        </authorList>
    </citation>
    <scope>NUCLEOTIDE SEQUENCE [LARGE SCALE MRNA] (ISOFORMS 1 AND 2)</scope>
    <source>
        <tissue>Brain</tissue>
        <tissue>Urinary bladder</tissue>
    </source>
</reference>
<reference key="4">
    <citation type="journal article" date="2017" name="Nat. Struct. Mol. Biol.">
        <title>Site-specific mapping of the human SUMO proteome reveals co-modification with phosphorylation.</title>
        <authorList>
            <person name="Hendriks I.A."/>
            <person name="Lyon D."/>
            <person name="Young C."/>
            <person name="Jensen L.J."/>
            <person name="Vertegaal A.C."/>
            <person name="Nielsen M.L."/>
        </authorList>
    </citation>
    <scope>SUMOYLATION [LARGE SCALE ANALYSIS] AT LYS-314 AND LYS-328</scope>
    <scope>IDENTIFICATION BY MASS SPECTROMETRY [LARGE SCALE ANALYSIS]</scope>
</reference>
<proteinExistence type="evidence at protein level"/>